<dbReference type="EC" id="7.-.-.-" evidence="1"/>
<dbReference type="EMBL" id="AM933173">
    <property type="protein sequence ID" value="CAR37521.1"/>
    <property type="molecule type" value="Genomic_DNA"/>
</dbReference>
<dbReference type="RefSeq" id="WP_000231961.1">
    <property type="nucleotide sequence ID" value="NC_011274.1"/>
</dbReference>
<dbReference type="SMR" id="B5RAK3"/>
<dbReference type="KEGG" id="seg:SG1662"/>
<dbReference type="HOGENOM" id="CLU_042020_0_0_6"/>
<dbReference type="Proteomes" id="UP000008321">
    <property type="component" value="Chromosome"/>
</dbReference>
<dbReference type="GO" id="GO:0005886">
    <property type="term" value="C:plasma membrane"/>
    <property type="evidence" value="ECO:0007669"/>
    <property type="project" value="UniProtKB-SubCell"/>
</dbReference>
<dbReference type="GO" id="GO:0022900">
    <property type="term" value="P:electron transport chain"/>
    <property type="evidence" value="ECO:0007669"/>
    <property type="project" value="UniProtKB-UniRule"/>
</dbReference>
<dbReference type="GO" id="GO:0055085">
    <property type="term" value="P:transmembrane transport"/>
    <property type="evidence" value="ECO:0007669"/>
    <property type="project" value="InterPro"/>
</dbReference>
<dbReference type="HAMAP" id="MF_00462">
    <property type="entry name" value="RsxD_RnfD"/>
    <property type="match status" value="1"/>
</dbReference>
<dbReference type="InterPro" id="IPR004338">
    <property type="entry name" value="NqrB/RnfD"/>
</dbReference>
<dbReference type="InterPro" id="IPR011303">
    <property type="entry name" value="RnfD_bac"/>
</dbReference>
<dbReference type="NCBIfam" id="NF002011">
    <property type="entry name" value="PRK00816.1"/>
    <property type="match status" value="1"/>
</dbReference>
<dbReference type="NCBIfam" id="TIGR01946">
    <property type="entry name" value="rnfD"/>
    <property type="match status" value="1"/>
</dbReference>
<dbReference type="PANTHER" id="PTHR30578">
    <property type="entry name" value="ELECTRON TRANSPORT COMPLEX PROTEIN RNFD"/>
    <property type="match status" value="1"/>
</dbReference>
<dbReference type="PANTHER" id="PTHR30578:SF0">
    <property type="entry name" value="ION-TRANSLOCATING OXIDOREDUCTASE COMPLEX SUBUNIT D"/>
    <property type="match status" value="1"/>
</dbReference>
<dbReference type="Pfam" id="PF03116">
    <property type="entry name" value="NQR2_RnfD_RnfE"/>
    <property type="match status" value="1"/>
</dbReference>
<accession>B5RAK3</accession>
<reference key="1">
    <citation type="journal article" date="2008" name="Genome Res.">
        <title>Comparative genome analysis of Salmonella enteritidis PT4 and Salmonella gallinarum 287/91 provides insights into evolutionary and host adaptation pathways.</title>
        <authorList>
            <person name="Thomson N.R."/>
            <person name="Clayton D.J."/>
            <person name="Windhorst D."/>
            <person name="Vernikos G."/>
            <person name="Davidson S."/>
            <person name="Churcher C."/>
            <person name="Quail M.A."/>
            <person name="Stevens M."/>
            <person name="Jones M.A."/>
            <person name="Watson M."/>
            <person name="Barron A."/>
            <person name="Layton A."/>
            <person name="Pickard D."/>
            <person name="Kingsley R.A."/>
            <person name="Bignell A."/>
            <person name="Clark L."/>
            <person name="Harris B."/>
            <person name="Ormond D."/>
            <person name="Abdellah Z."/>
            <person name="Brooks K."/>
            <person name="Cherevach I."/>
            <person name="Chillingworth T."/>
            <person name="Woodward J."/>
            <person name="Norberczak H."/>
            <person name="Lord A."/>
            <person name="Arrowsmith C."/>
            <person name="Jagels K."/>
            <person name="Moule S."/>
            <person name="Mungall K."/>
            <person name="Saunders M."/>
            <person name="Whitehead S."/>
            <person name="Chabalgoity J.A."/>
            <person name="Maskell D."/>
            <person name="Humphreys T."/>
            <person name="Roberts M."/>
            <person name="Barrow P.A."/>
            <person name="Dougan G."/>
            <person name="Parkhill J."/>
        </authorList>
    </citation>
    <scope>NUCLEOTIDE SEQUENCE [LARGE SCALE GENOMIC DNA]</scope>
    <source>
        <strain>287/91 / NCTC 13346</strain>
    </source>
</reference>
<gene>
    <name evidence="1" type="primary">rsxD</name>
    <name type="synonym">rnfD</name>
    <name type="ordered locus">SG1662</name>
</gene>
<feature type="chain" id="PRO_1000125394" description="Ion-translocating oxidoreductase complex subunit D">
    <location>
        <begin position="1"/>
        <end position="352"/>
    </location>
</feature>
<feature type="transmembrane region" description="Helical" evidence="1">
    <location>
        <begin position="20"/>
        <end position="40"/>
    </location>
</feature>
<feature type="transmembrane region" description="Helical" evidence="1">
    <location>
        <begin position="42"/>
        <end position="62"/>
    </location>
</feature>
<feature type="transmembrane region" description="Helical" evidence="1">
    <location>
        <begin position="69"/>
        <end position="91"/>
    </location>
</feature>
<feature type="transmembrane region" description="Helical" evidence="1">
    <location>
        <begin position="123"/>
        <end position="143"/>
    </location>
</feature>
<feature type="transmembrane region" description="Helical" evidence="1">
    <location>
        <begin position="215"/>
        <end position="235"/>
    </location>
</feature>
<feature type="transmembrane region" description="Helical" evidence="1">
    <location>
        <begin position="242"/>
        <end position="262"/>
    </location>
</feature>
<feature type="transmembrane region" description="Helical" evidence="1">
    <location>
        <begin position="267"/>
        <end position="287"/>
    </location>
</feature>
<feature type="transmembrane region" description="Helical" evidence="1">
    <location>
        <begin position="301"/>
        <end position="321"/>
    </location>
</feature>
<feature type="transmembrane region" description="Helical" evidence="1">
    <location>
        <begin position="322"/>
        <end position="342"/>
    </location>
</feature>
<feature type="modified residue" description="FMN phosphoryl threonine" evidence="1">
    <location>
        <position position="187"/>
    </location>
</feature>
<evidence type="ECO:0000255" key="1">
    <source>
        <dbReference type="HAMAP-Rule" id="MF_00462"/>
    </source>
</evidence>
<protein>
    <recommendedName>
        <fullName evidence="1">Ion-translocating oxidoreductase complex subunit D</fullName>
        <ecNumber evidence="1">7.-.-.-</ecNumber>
    </recommendedName>
    <alternativeName>
        <fullName evidence="1">Rsx electron transport complex subunit D</fullName>
    </alternativeName>
</protein>
<proteinExistence type="inferred from homology"/>
<name>RSXD_SALG2</name>
<comment type="function">
    <text evidence="1">Part of a membrane-bound complex that couples electron transfer with translocation of ions across the membrane. Required to maintain the reduced state of SoxR.</text>
</comment>
<comment type="cofactor">
    <cofactor evidence="1">
        <name>FMN</name>
        <dbReference type="ChEBI" id="CHEBI:58210"/>
    </cofactor>
</comment>
<comment type="subunit">
    <text evidence="1">The complex is composed of six subunits: RsxA, RsxB, RsxC, RsxD, RsxE and RsxG.</text>
</comment>
<comment type="subcellular location">
    <subcellularLocation>
        <location evidence="1">Cell inner membrane</location>
        <topology evidence="1">Multi-pass membrane protein</topology>
    </subcellularLocation>
</comment>
<comment type="similarity">
    <text evidence="1">Belongs to the NqrB/RnfD family.</text>
</comment>
<keyword id="KW-0997">Cell inner membrane</keyword>
<keyword id="KW-1003">Cell membrane</keyword>
<keyword id="KW-0249">Electron transport</keyword>
<keyword id="KW-0285">Flavoprotein</keyword>
<keyword id="KW-0288">FMN</keyword>
<keyword id="KW-0472">Membrane</keyword>
<keyword id="KW-0597">Phosphoprotein</keyword>
<keyword id="KW-1278">Translocase</keyword>
<keyword id="KW-0812">Transmembrane</keyword>
<keyword id="KW-1133">Transmembrane helix</keyword>
<keyword id="KW-0813">Transport</keyword>
<sequence length="352" mass="38219">MVFRIASSPYTHNQRQTSRIMLLVVIAALPGIAAQTWFFGWGTLFQIVLAAITALVAEAIVLRLRKQSVASHLQDYSALLTGLLLAVSIPPLAPWWMVVLGTGFAIIIAKQLYGGLGQNPFNPAMIGYVVLLISFPVQMTSWLPPYEIAATTPDMLDTLRMIFSGHTASGGDMTLLRIGIDGISQATPLDTFKTSLRAGHSVEQIMQYPIYSGALAGVGWQWVNLAWLVGGVFLLWQKAIRWHIPVSFLLTLALCAALGWLFSPATLASPQLHLLSGATMLGAFFILTDPVTASTTNHGRLIFGALAGVLVWLIRSFGGYPDGVAFAVLLANITVPLIDYYTRPRVYGHRKG</sequence>
<organism>
    <name type="scientific">Salmonella gallinarum (strain 287/91 / NCTC 13346)</name>
    <dbReference type="NCBI Taxonomy" id="550538"/>
    <lineage>
        <taxon>Bacteria</taxon>
        <taxon>Pseudomonadati</taxon>
        <taxon>Pseudomonadota</taxon>
        <taxon>Gammaproteobacteria</taxon>
        <taxon>Enterobacterales</taxon>
        <taxon>Enterobacteriaceae</taxon>
        <taxon>Salmonella</taxon>
    </lineage>
</organism>